<dbReference type="EMBL" id="CP000151">
    <property type="protein sequence ID" value="ABB08728.1"/>
    <property type="molecule type" value="Genomic_DNA"/>
</dbReference>
<dbReference type="RefSeq" id="WP_006753671.1">
    <property type="nucleotide sequence ID" value="NZ_WNDV01000021.1"/>
</dbReference>
<dbReference type="SMR" id="Q39FN8"/>
<dbReference type="KEGG" id="bur:Bcep18194_A5134"/>
<dbReference type="HOGENOM" id="CLU_114306_2_2_4"/>
<dbReference type="Proteomes" id="UP000002705">
    <property type="component" value="Chromosome 1"/>
</dbReference>
<dbReference type="GO" id="GO:1990904">
    <property type="term" value="C:ribonucleoprotein complex"/>
    <property type="evidence" value="ECO:0007669"/>
    <property type="project" value="UniProtKB-KW"/>
</dbReference>
<dbReference type="GO" id="GO:0005840">
    <property type="term" value="C:ribosome"/>
    <property type="evidence" value="ECO:0007669"/>
    <property type="project" value="UniProtKB-KW"/>
</dbReference>
<dbReference type="GO" id="GO:0003735">
    <property type="term" value="F:structural constituent of ribosome"/>
    <property type="evidence" value="ECO:0007669"/>
    <property type="project" value="InterPro"/>
</dbReference>
<dbReference type="GO" id="GO:0006412">
    <property type="term" value="P:translation"/>
    <property type="evidence" value="ECO:0007669"/>
    <property type="project" value="UniProtKB-UniRule"/>
</dbReference>
<dbReference type="Gene3D" id="4.10.830.30">
    <property type="entry name" value="Ribosomal protein L31"/>
    <property type="match status" value="1"/>
</dbReference>
<dbReference type="HAMAP" id="MF_00502">
    <property type="entry name" value="Ribosomal_bL31_2"/>
    <property type="match status" value="1"/>
</dbReference>
<dbReference type="InterPro" id="IPR034704">
    <property type="entry name" value="Ribosomal_bL28/bL31-like_sf"/>
</dbReference>
<dbReference type="InterPro" id="IPR002150">
    <property type="entry name" value="Ribosomal_bL31"/>
</dbReference>
<dbReference type="InterPro" id="IPR027493">
    <property type="entry name" value="Ribosomal_bL31_B"/>
</dbReference>
<dbReference type="InterPro" id="IPR042105">
    <property type="entry name" value="Ribosomal_bL31_sf"/>
</dbReference>
<dbReference type="NCBIfam" id="TIGR00105">
    <property type="entry name" value="L31"/>
    <property type="match status" value="1"/>
</dbReference>
<dbReference type="NCBIfam" id="NF002462">
    <property type="entry name" value="PRK01678.1"/>
    <property type="match status" value="1"/>
</dbReference>
<dbReference type="PANTHER" id="PTHR33280">
    <property type="entry name" value="50S RIBOSOMAL PROTEIN L31, CHLOROPLASTIC"/>
    <property type="match status" value="1"/>
</dbReference>
<dbReference type="PANTHER" id="PTHR33280:SF1">
    <property type="entry name" value="LARGE RIBOSOMAL SUBUNIT PROTEIN BL31C"/>
    <property type="match status" value="1"/>
</dbReference>
<dbReference type="Pfam" id="PF01197">
    <property type="entry name" value="Ribosomal_L31"/>
    <property type="match status" value="1"/>
</dbReference>
<dbReference type="PRINTS" id="PR01249">
    <property type="entry name" value="RIBOSOMALL31"/>
</dbReference>
<dbReference type="SUPFAM" id="SSF143800">
    <property type="entry name" value="L28p-like"/>
    <property type="match status" value="1"/>
</dbReference>
<name>RL31B_BURL3</name>
<comment type="subunit">
    <text evidence="1">Part of the 50S ribosomal subunit.</text>
</comment>
<comment type="similarity">
    <text evidence="1">Belongs to the bacterial ribosomal protein bL31 family. Type B subfamily.</text>
</comment>
<organism>
    <name type="scientific">Burkholderia lata (strain ATCC 17760 / DSM 23089 / LMG 22485 / NCIMB 9086 / R18194 / 383)</name>
    <dbReference type="NCBI Taxonomy" id="482957"/>
    <lineage>
        <taxon>Bacteria</taxon>
        <taxon>Pseudomonadati</taxon>
        <taxon>Pseudomonadota</taxon>
        <taxon>Betaproteobacteria</taxon>
        <taxon>Burkholderiales</taxon>
        <taxon>Burkholderiaceae</taxon>
        <taxon>Burkholderia</taxon>
        <taxon>Burkholderia cepacia complex</taxon>
    </lineage>
</organism>
<feature type="chain" id="PRO_0000259104" description="Large ribosomal subunit protein bL31B">
    <location>
        <begin position="1"/>
        <end position="86"/>
    </location>
</feature>
<reference key="1">
    <citation type="submission" date="2005-10" db="EMBL/GenBank/DDBJ databases">
        <title>Complete sequence of chromosome 1 of Burkholderia sp. 383.</title>
        <authorList>
            <consortium name="US DOE Joint Genome Institute"/>
            <person name="Copeland A."/>
            <person name="Lucas S."/>
            <person name="Lapidus A."/>
            <person name="Barry K."/>
            <person name="Detter J.C."/>
            <person name="Glavina T."/>
            <person name="Hammon N."/>
            <person name="Israni S."/>
            <person name="Pitluck S."/>
            <person name="Chain P."/>
            <person name="Malfatti S."/>
            <person name="Shin M."/>
            <person name="Vergez L."/>
            <person name="Schmutz J."/>
            <person name="Larimer F."/>
            <person name="Land M."/>
            <person name="Kyrpides N."/>
            <person name="Lykidis A."/>
            <person name="Richardson P."/>
        </authorList>
    </citation>
    <scope>NUCLEOTIDE SEQUENCE [LARGE SCALE GENOMIC DNA]</scope>
    <source>
        <strain>ATCC 17760 / DSM 23089 / LMG 22485 / NCIMB 9086 / R18194 / 383</strain>
    </source>
</reference>
<gene>
    <name evidence="1" type="primary">rpmE2</name>
    <name type="ordered locus">Bcep18194_A5134</name>
</gene>
<sequence length="86" mass="9834">MKEGIHPNYREVVFQDMSNGFKFITRSTIQTRENIELDGKTYPLAKIEVSSESHSFYTGQQKIMDTAGRVEKFKNKFGVRASGKAK</sequence>
<proteinExistence type="inferred from homology"/>
<keyword id="KW-0687">Ribonucleoprotein</keyword>
<keyword id="KW-0689">Ribosomal protein</keyword>
<evidence type="ECO:0000255" key="1">
    <source>
        <dbReference type="HAMAP-Rule" id="MF_00502"/>
    </source>
</evidence>
<evidence type="ECO:0000305" key="2"/>
<protein>
    <recommendedName>
        <fullName evidence="1">Large ribosomal subunit protein bL31B</fullName>
    </recommendedName>
    <alternativeName>
        <fullName evidence="2">50S ribosomal protein L31 type B</fullName>
    </alternativeName>
</protein>
<accession>Q39FN8</accession>